<protein>
    <recommendedName>
        <fullName>Apolipoprotein A-I</fullName>
        <shortName>Apo-AI</shortName>
        <shortName>ApoA-I</shortName>
    </recommendedName>
    <alternativeName>
        <fullName>Apolipoprotein A1</fullName>
    </alternativeName>
    <component>
        <recommendedName>
            <fullName>Proapolipoprotein A-I</fullName>
            <shortName>ProapoA-I</shortName>
        </recommendedName>
    </component>
</protein>
<organism>
    <name type="scientific">Sparus aurata</name>
    <name type="common">Gilthead sea bream</name>
    <dbReference type="NCBI Taxonomy" id="8175"/>
    <lineage>
        <taxon>Eukaryota</taxon>
        <taxon>Metazoa</taxon>
        <taxon>Chordata</taxon>
        <taxon>Craniata</taxon>
        <taxon>Vertebrata</taxon>
        <taxon>Euteleostomi</taxon>
        <taxon>Actinopterygii</taxon>
        <taxon>Neopterygii</taxon>
        <taxon>Teleostei</taxon>
        <taxon>Neoteleostei</taxon>
        <taxon>Acanthomorphata</taxon>
        <taxon>Eupercaria</taxon>
        <taxon>Spariformes</taxon>
        <taxon>Sparidae</taxon>
        <taxon>Sparus</taxon>
    </lineage>
</organism>
<reference key="1">
    <citation type="journal article" date="1998" name="Biochim. Biophys. Acta">
        <title>Cloning, characterisation and expression of the apolipoprotein A-I gene in the sea bream (Sparus aurata).</title>
        <authorList>
            <person name="Llewellyn L."/>
            <person name="Ramsurn V.P."/>
            <person name="Wigham T."/>
            <person name="Sweeney G.E."/>
            <person name="Power D.M."/>
        </authorList>
    </citation>
    <scope>NUCLEOTIDE SEQUENCE [MRNA]</scope>
    <source>
        <tissue>Liver</tissue>
    </source>
</reference>
<gene>
    <name type="primary">apoa1</name>
</gene>
<dbReference type="EMBL" id="AF013120">
    <property type="protein sequence ID" value="AAC78689.1"/>
    <property type="molecule type" value="mRNA"/>
</dbReference>
<dbReference type="SMR" id="O42175"/>
<dbReference type="FunCoup" id="O42175">
    <property type="interactions" value="35"/>
</dbReference>
<dbReference type="InParanoid" id="O42175"/>
<dbReference type="Proteomes" id="UP000472265">
    <property type="component" value="Unplaced"/>
</dbReference>
<dbReference type="GO" id="GO:0042627">
    <property type="term" value="C:chylomicron"/>
    <property type="evidence" value="ECO:0007669"/>
    <property type="project" value="TreeGrafter"/>
</dbReference>
<dbReference type="GO" id="GO:1903561">
    <property type="term" value="C:extracellular vesicle"/>
    <property type="evidence" value="ECO:0007669"/>
    <property type="project" value="TreeGrafter"/>
</dbReference>
<dbReference type="GO" id="GO:0034364">
    <property type="term" value="C:high-density lipoprotein particle"/>
    <property type="evidence" value="ECO:0007669"/>
    <property type="project" value="UniProtKB-KW"/>
</dbReference>
<dbReference type="GO" id="GO:0034362">
    <property type="term" value="C:low-density lipoprotein particle"/>
    <property type="evidence" value="ECO:0007669"/>
    <property type="project" value="TreeGrafter"/>
</dbReference>
<dbReference type="GO" id="GO:0034361">
    <property type="term" value="C:very-low-density lipoprotein particle"/>
    <property type="evidence" value="ECO:0007669"/>
    <property type="project" value="TreeGrafter"/>
</dbReference>
<dbReference type="GO" id="GO:0120020">
    <property type="term" value="F:cholesterol transfer activity"/>
    <property type="evidence" value="ECO:0007669"/>
    <property type="project" value="TreeGrafter"/>
</dbReference>
<dbReference type="GO" id="GO:0060228">
    <property type="term" value="F:phosphatidylcholine-sterol O-acyltransferase activator activity"/>
    <property type="evidence" value="ECO:0007669"/>
    <property type="project" value="TreeGrafter"/>
</dbReference>
<dbReference type="GO" id="GO:0005543">
    <property type="term" value="F:phospholipid binding"/>
    <property type="evidence" value="ECO:0007669"/>
    <property type="project" value="TreeGrafter"/>
</dbReference>
<dbReference type="GO" id="GO:0055090">
    <property type="term" value="P:acylglycerol homeostasis"/>
    <property type="evidence" value="ECO:0007669"/>
    <property type="project" value="TreeGrafter"/>
</dbReference>
<dbReference type="GO" id="GO:0033344">
    <property type="term" value="P:cholesterol efflux"/>
    <property type="evidence" value="ECO:0007669"/>
    <property type="project" value="TreeGrafter"/>
</dbReference>
<dbReference type="GO" id="GO:0008203">
    <property type="term" value="P:cholesterol metabolic process"/>
    <property type="evidence" value="ECO:0007669"/>
    <property type="project" value="UniProtKB-KW"/>
</dbReference>
<dbReference type="GO" id="GO:0042157">
    <property type="term" value="P:lipoprotein metabolic process"/>
    <property type="evidence" value="ECO:0007669"/>
    <property type="project" value="InterPro"/>
</dbReference>
<dbReference type="GO" id="GO:0033700">
    <property type="term" value="P:phospholipid efflux"/>
    <property type="evidence" value="ECO:0007669"/>
    <property type="project" value="TreeGrafter"/>
</dbReference>
<dbReference type="Gene3D" id="1.20.5.1230">
    <property type="entry name" value="Apolipoprotein A-I"/>
    <property type="match status" value="1"/>
</dbReference>
<dbReference type="InterPro" id="IPR000074">
    <property type="entry name" value="ApoA_E"/>
</dbReference>
<dbReference type="InterPro" id="IPR050163">
    <property type="entry name" value="Apolipoprotein_A1/A4/E"/>
</dbReference>
<dbReference type="PANTHER" id="PTHR18976">
    <property type="entry name" value="APOLIPOPROTEIN"/>
    <property type="match status" value="1"/>
</dbReference>
<dbReference type="PANTHER" id="PTHR18976:SF11">
    <property type="entry name" value="APOLIPOPROTEIN A-I"/>
    <property type="match status" value="1"/>
</dbReference>
<dbReference type="Pfam" id="PF01442">
    <property type="entry name" value="Apolipoprotein"/>
    <property type="match status" value="1"/>
</dbReference>
<dbReference type="SUPFAM" id="SSF58113">
    <property type="entry name" value="Apolipoprotein A-I"/>
    <property type="match status" value="1"/>
</dbReference>
<evidence type="ECO:0000250" key="1"/>
<evidence type="ECO:0000255" key="2"/>
<evidence type="ECO:0000305" key="3"/>
<feature type="signal peptide" evidence="2">
    <location>
        <begin position="1"/>
        <end position="18"/>
    </location>
</feature>
<feature type="chain" id="PRO_0000425348" description="Proapolipoprotein A-I">
    <location>
        <begin position="19"/>
        <end position="260"/>
    </location>
</feature>
<feature type="chain" id="PRO_0000001974" description="Apolipoprotein A-I">
    <location>
        <begin position="24"/>
        <end position="260"/>
    </location>
</feature>
<feature type="repeat" description="1">
    <location>
        <begin position="64"/>
        <end position="85"/>
    </location>
</feature>
<feature type="repeat" description="2">
    <location>
        <begin position="87"/>
        <end position="107"/>
    </location>
</feature>
<feature type="repeat" description="3; half-length">
    <location>
        <begin position="108"/>
        <end position="118"/>
    </location>
</feature>
<feature type="repeat" description="4">
    <location>
        <begin position="119"/>
        <end position="140"/>
    </location>
</feature>
<feature type="repeat" description="5">
    <location>
        <begin position="141"/>
        <end position="162"/>
    </location>
</feature>
<feature type="repeat" description="6">
    <location>
        <begin position="163"/>
        <end position="184"/>
    </location>
</feature>
<feature type="repeat" description="7">
    <location>
        <begin position="185"/>
        <end position="206"/>
    </location>
</feature>
<feature type="repeat" description="8">
    <location>
        <begin position="207"/>
        <end position="225"/>
    </location>
</feature>
<feature type="repeat" description="9; half-length">
    <location>
        <begin position="226"/>
        <end position="236"/>
    </location>
</feature>
<feature type="repeat" description="10">
    <location>
        <begin position="237"/>
        <end position="260"/>
    </location>
</feature>
<feature type="region of interest" description="3 X approximate tandem repeats">
    <location>
        <begin position="32"/>
        <end position="63"/>
    </location>
</feature>
<feature type="region of interest" description="10 X approximate tandem repeats">
    <location>
        <begin position="64"/>
        <end position="260"/>
    </location>
</feature>
<comment type="function">
    <text evidence="1">Participates in the reverse transport of cholesterol from tissues to the liver for excretion by promoting cholesterol efflux from tissues and by acting as a cofactor for the lecithin cholesterol acyltransferase (LCAT).</text>
</comment>
<comment type="subcellular location">
    <subcellularLocation>
        <location evidence="1">Secreted</location>
    </subcellularLocation>
</comment>
<comment type="tissue specificity">
    <text>Strong expression in liver with lower expression in intestine.</text>
</comment>
<comment type="similarity">
    <text evidence="3">Belongs to the apolipoprotein A1/A4/E family.</text>
</comment>
<sequence length="260" mass="29634">MKFAALALALLLAVGSHAASMQADAPSQLDHARAVLDVYLTQVKDMSLRAVNQLDDPQYAEFKTNLAQRIEEMYTQIKTLQGSVSPMTDSFYNTVMEVTKDTRESLNVDLEALKSSLAPQNEQLKQVIEKHLNDYRTLLTPIYNDYKTKHDEEMAALKTRLEPVMEELRTKIQANVEETKAVLMPMVETVRTKVTERLESLREVVQPYVQEYKEQMKQMYDQAQTVDTDALRTKITPLVEEIKVKMNAIFEIIAASVTKS</sequence>
<name>APOA1_SPAAU</name>
<keyword id="KW-0153">Cholesterol metabolism</keyword>
<keyword id="KW-0345">HDL</keyword>
<keyword id="KW-0443">Lipid metabolism</keyword>
<keyword id="KW-0445">Lipid transport</keyword>
<keyword id="KW-1185">Reference proteome</keyword>
<keyword id="KW-0677">Repeat</keyword>
<keyword id="KW-0964">Secreted</keyword>
<keyword id="KW-0732">Signal</keyword>
<keyword id="KW-0753">Steroid metabolism</keyword>
<keyword id="KW-1207">Sterol metabolism</keyword>
<keyword id="KW-0813">Transport</keyword>
<proteinExistence type="evidence at transcript level"/>
<accession>O42175</accession>